<dbReference type="EMBL" id="AK030087">
    <property type="protein sequence ID" value="BAC26777.1"/>
    <property type="molecule type" value="mRNA"/>
</dbReference>
<dbReference type="EMBL" id="AK014839">
    <property type="protein sequence ID" value="BAB29574.1"/>
    <property type="molecule type" value="mRNA"/>
</dbReference>
<dbReference type="EMBL" id="CH466530">
    <property type="protein sequence ID" value="EDL35029.1"/>
    <property type="molecule type" value="Genomic_DNA"/>
</dbReference>
<dbReference type="EMBL" id="BC138917">
    <property type="protein sequence ID" value="AAI38918.1"/>
    <property type="molecule type" value="mRNA"/>
</dbReference>
<dbReference type="EMBL" id="BC138920">
    <property type="protein sequence ID" value="AAI38921.1"/>
    <property type="molecule type" value="mRNA"/>
</dbReference>
<dbReference type="CCDS" id="CCDS17304.1"/>
<dbReference type="RefSeq" id="NP_080498.1">
    <property type="nucleotide sequence ID" value="NM_026222.3"/>
</dbReference>
<dbReference type="SMR" id="Q9D5Y1"/>
<dbReference type="BioGRID" id="206277">
    <property type="interactions" value="3"/>
</dbReference>
<dbReference type="FunCoup" id="Q9D5Y1">
    <property type="interactions" value="153"/>
</dbReference>
<dbReference type="STRING" id="10090.ENSMUSP00000029222"/>
<dbReference type="iPTMnet" id="Q9D5Y1"/>
<dbReference type="PhosphoSitePlus" id="Q9D5Y1"/>
<dbReference type="SwissPalm" id="Q9D5Y1"/>
<dbReference type="PaxDb" id="10090-ENSMUSP00000029222"/>
<dbReference type="ProteomicsDB" id="265364"/>
<dbReference type="Antibodypedia" id="79042">
    <property type="antibodies" value="105 antibodies from 15 providers"/>
</dbReference>
<dbReference type="DNASU" id="51938"/>
<dbReference type="Ensembl" id="ENSMUST00000029222.8">
    <property type="protein sequence ID" value="ENSMUSP00000029222.6"/>
    <property type="gene ID" value="ENSMUSG00000027676.12"/>
</dbReference>
<dbReference type="GeneID" id="51938"/>
<dbReference type="KEGG" id="mmu:51938"/>
<dbReference type="UCSC" id="uc008oxi.1">
    <property type="organism name" value="mouse"/>
</dbReference>
<dbReference type="AGR" id="MGI:1289263"/>
<dbReference type="CTD" id="339829"/>
<dbReference type="MGI" id="MGI:1289263">
    <property type="gene designation" value="Ccdc39"/>
</dbReference>
<dbReference type="VEuPathDB" id="HostDB:ENSMUSG00000027676"/>
<dbReference type="eggNOG" id="ENOG502QS0D">
    <property type="taxonomic scope" value="Eukaryota"/>
</dbReference>
<dbReference type="GeneTree" id="ENSGT00390000015010"/>
<dbReference type="HOGENOM" id="CLU_009793_2_0_1"/>
<dbReference type="InParanoid" id="Q9D5Y1"/>
<dbReference type="OMA" id="NSKNCDE"/>
<dbReference type="OrthoDB" id="10259720at2759"/>
<dbReference type="PhylomeDB" id="Q9D5Y1"/>
<dbReference type="TreeFam" id="TF329312"/>
<dbReference type="BioGRID-ORCS" id="51938">
    <property type="hits" value="2 hits in 78 CRISPR screens"/>
</dbReference>
<dbReference type="ChiTaRS" id="Ccdc39">
    <property type="organism name" value="mouse"/>
</dbReference>
<dbReference type="PRO" id="PR:Q9D5Y1"/>
<dbReference type="Proteomes" id="UP000000589">
    <property type="component" value="Chromosome 3"/>
</dbReference>
<dbReference type="RNAct" id="Q9D5Y1">
    <property type="molecule type" value="protein"/>
</dbReference>
<dbReference type="Bgee" id="ENSMUSG00000027676">
    <property type="expression patterns" value="Expressed in spermatocyte and 197 other cell types or tissues"/>
</dbReference>
<dbReference type="GO" id="GO:0097729">
    <property type="term" value="C:9+2 motile cilium"/>
    <property type="evidence" value="ECO:0000269"/>
    <property type="project" value="MGI"/>
</dbReference>
<dbReference type="GO" id="GO:0005930">
    <property type="term" value="C:axoneme"/>
    <property type="evidence" value="ECO:0000250"/>
    <property type="project" value="UniProtKB"/>
</dbReference>
<dbReference type="GO" id="GO:0005829">
    <property type="term" value="C:cytosol"/>
    <property type="evidence" value="ECO:0000314"/>
    <property type="project" value="MGI"/>
</dbReference>
<dbReference type="GO" id="GO:0005576">
    <property type="term" value="C:extracellular region"/>
    <property type="evidence" value="ECO:0007669"/>
    <property type="project" value="GOC"/>
</dbReference>
<dbReference type="GO" id="GO:0097386">
    <property type="term" value="C:glial cell projection"/>
    <property type="evidence" value="ECO:0000269"/>
    <property type="project" value="MGI"/>
</dbReference>
<dbReference type="GO" id="GO:0070286">
    <property type="term" value="P:axonemal dynein complex assembly"/>
    <property type="evidence" value="ECO:0000250"/>
    <property type="project" value="UniProtKB"/>
</dbReference>
<dbReference type="GO" id="GO:0007420">
    <property type="term" value="P:brain development"/>
    <property type="evidence" value="ECO:0000315"/>
    <property type="project" value="MGI"/>
</dbReference>
<dbReference type="GO" id="GO:0022010">
    <property type="term" value="P:central nervous system myelination"/>
    <property type="evidence" value="ECO:0000315"/>
    <property type="project" value="MGI"/>
</dbReference>
<dbReference type="GO" id="GO:0021987">
    <property type="term" value="P:cerebral cortex development"/>
    <property type="evidence" value="ECO:0000315"/>
    <property type="project" value="MGI"/>
</dbReference>
<dbReference type="GO" id="GO:0090660">
    <property type="term" value="P:cerebrospinal fluid circulation"/>
    <property type="evidence" value="ECO:0000315"/>
    <property type="project" value="MGI"/>
</dbReference>
<dbReference type="GO" id="GO:0060285">
    <property type="term" value="P:cilium-dependent cell motility"/>
    <property type="evidence" value="ECO:0000250"/>
    <property type="project" value="UniProtKB"/>
</dbReference>
<dbReference type="GO" id="GO:0071907">
    <property type="term" value="P:determination of digestive tract left/right asymmetry"/>
    <property type="evidence" value="ECO:0007669"/>
    <property type="project" value="Ensembl"/>
</dbReference>
<dbReference type="GO" id="GO:0007368">
    <property type="term" value="P:determination of left/right symmetry"/>
    <property type="evidence" value="ECO:0000315"/>
    <property type="project" value="MGI"/>
</dbReference>
<dbReference type="GO" id="GO:0071910">
    <property type="term" value="P:determination of liver left/right asymmetry"/>
    <property type="evidence" value="ECO:0007669"/>
    <property type="project" value="Ensembl"/>
</dbReference>
<dbReference type="GO" id="GO:0035469">
    <property type="term" value="P:determination of pancreatic left/right asymmetry"/>
    <property type="evidence" value="ECO:0007669"/>
    <property type="project" value="Ensembl"/>
</dbReference>
<dbReference type="GO" id="GO:0060287">
    <property type="term" value="P:epithelial cilium movement involved in determination of left/right asymmetry"/>
    <property type="evidence" value="ECO:0000250"/>
    <property type="project" value="UniProtKB"/>
</dbReference>
<dbReference type="GO" id="GO:0003351">
    <property type="term" value="P:epithelial cilium movement involved in extracellular fluid movement"/>
    <property type="evidence" value="ECO:0000315"/>
    <property type="project" value="MGI"/>
</dbReference>
<dbReference type="GO" id="GO:0061966">
    <property type="term" value="P:establishment of left/right asymmetry"/>
    <property type="evidence" value="ECO:0000315"/>
    <property type="project" value="MGI"/>
</dbReference>
<dbReference type="GO" id="GO:0051649">
    <property type="term" value="P:establishment of localization in cell"/>
    <property type="evidence" value="ECO:0000315"/>
    <property type="project" value="MGI"/>
</dbReference>
<dbReference type="GO" id="GO:0030317">
    <property type="term" value="P:flagellated sperm motility"/>
    <property type="evidence" value="ECO:0007669"/>
    <property type="project" value="Ensembl"/>
</dbReference>
<dbReference type="GO" id="GO:0007507">
    <property type="term" value="P:heart development"/>
    <property type="evidence" value="ECO:0000315"/>
    <property type="project" value="MGI"/>
</dbReference>
<dbReference type="GO" id="GO:0001947">
    <property type="term" value="P:heart looping"/>
    <property type="evidence" value="ECO:0007669"/>
    <property type="project" value="Ensembl"/>
</dbReference>
<dbReference type="GO" id="GO:0036159">
    <property type="term" value="P:inner dynein arm assembly"/>
    <property type="evidence" value="ECO:0000315"/>
    <property type="project" value="MGI"/>
</dbReference>
<dbReference type="GO" id="GO:0040011">
    <property type="term" value="P:locomotion"/>
    <property type="evidence" value="ECO:0000315"/>
    <property type="project" value="MGI"/>
</dbReference>
<dbReference type="GO" id="GO:0030324">
    <property type="term" value="P:lung development"/>
    <property type="evidence" value="ECO:0007669"/>
    <property type="project" value="Ensembl"/>
</dbReference>
<dbReference type="GO" id="GO:0014004">
    <property type="term" value="P:microglia differentiation"/>
    <property type="evidence" value="ECO:0000315"/>
    <property type="project" value="MGI"/>
</dbReference>
<dbReference type="GO" id="GO:0044458">
    <property type="term" value="P:motile cilium assembly"/>
    <property type="evidence" value="ECO:0007669"/>
    <property type="project" value="Ensembl"/>
</dbReference>
<dbReference type="GO" id="GO:0007399">
    <property type="term" value="P:nervous system development"/>
    <property type="evidence" value="ECO:0000315"/>
    <property type="project" value="MGI"/>
</dbReference>
<dbReference type="GO" id="GO:0150076">
    <property type="term" value="P:neuroinflammatory response"/>
    <property type="evidence" value="ECO:0000315"/>
    <property type="project" value="MGI"/>
</dbReference>
<dbReference type="GO" id="GO:0042551">
    <property type="term" value="P:neuron maturation"/>
    <property type="evidence" value="ECO:0000315"/>
    <property type="project" value="MGI"/>
</dbReference>
<dbReference type="GO" id="GO:0048812">
    <property type="term" value="P:neuron projection morphogenesis"/>
    <property type="evidence" value="ECO:0000315"/>
    <property type="project" value="MGI"/>
</dbReference>
<dbReference type="GO" id="GO:0061512">
    <property type="term" value="P:protein localization to cilium"/>
    <property type="evidence" value="ECO:0000315"/>
    <property type="project" value="MGI"/>
</dbReference>
<dbReference type="GO" id="GO:0003356">
    <property type="term" value="P:regulation of cilium beat frequency"/>
    <property type="evidence" value="ECO:0007669"/>
    <property type="project" value="Ensembl"/>
</dbReference>
<dbReference type="GO" id="GO:0060074">
    <property type="term" value="P:synapse maturation"/>
    <property type="evidence" value="ECO:0000315"/>
    <property type="project" value="MGI"/>
</dbReference>
<dbReference type="InterPro" id="IPR033290">
    <property type="entry name" value="CCDC39"/>
</dbReference>
<dbReference type="PANTHER" id="PTHR18962">
    <property type="entry name" value="COILED-COIL DOMAIN-CONTAINING PROTEIN 39"/>
    <property type="match status" value="1"/>
</dbReference>
<dbReference type="PANTHER" id="PTHR18962:SF0">
    <property type="entry name" value="COILED-COIL DOMAIN-CONTAINING PROTEIN 39"/>
    <property type="match status" value="1"/>
</dbReference>
<dbReference type="Pfam" id="PF24161">
    <property type="entry name" value="CCDC39"/>
    <property type="match status" value="1"/>
</dbReference>
<dbReference type="SUPFAM" id="SSF57997">
    <property type="entry name" value="Tropomyosin"/>
    <property type="match status" value="1"/>
</dbReference>
<reference key="1">
    <citation type="journal article" date="2005" name="Science">
        <title>The transcriptional landscape of the mammalian genome.</title>
        <authorList>
            <person name="Carninci P."/>
            <person name="Kasukawa T."/>
            <person name="Katayama S."/>
            <person name="Gough J."/>
            <person name="Frith M.C."/>
            <person name="Maeda N."/>
            <person name="Oyama R."/>
            <person name="Ravasi T."/>
            <person name="Lenhard B."/>
            <person name="Wells C."/>
            <person name="Kodzius R."/>
            <person name="Shimokawa K."/>
            <person name="Bajic V.B."/>
            <person name="Brenner S.E."/>
            <person name="Batalov S."/>
            <person name="Forrest A.R."/>
            <person name="Zavolan M."/>
            <person name="Davis M.J."/>
            <person name="Wilming L.G."/>
            <person name="Aidinis V."/>
            <person name="Allen J.E."/>
            <person name="Ambesi-Impiombato A."/>
            <person name="Apweiler R."/>
            <person name="Aturaliya R.N."/>
            <person name="Bailey T.L."/>
            <person name="Bansal M."/>
            <person name="Baxter L."/>
            <person name="Beisel K.W."/>
            <person name="Bersano T."/>
            <person name="Bono H."/>
            <person name="Chalk A.M."/>
            <person name="Chiu K.P."/>
            <person name="Choudhary V."/>
            <person name="Christoffels A."/>
            <person name="Clutterbuck D.R."/>
            <person name="Crowe M.L."/>
            <person name="Dalla E."/>
            <person name="Dalrymple B.P."/>
            <person name="de Bono B."/>
            <person name="Della Gatta G."/>
            <person name="di Bernardo D."/>
            <person name="Down T."/>
            <person name="Engstrom P."/>
            <person name="Fagiolini M."/>
            <person name="Faulkner G."/>
            <person name="Fletcher C.F."/>
            <person name="Fukushima T."/>
            <person name="Furuno M."/>
            <person name="Futaki S."/>
            <person name="Gariboldi M."/>
            <person name="Georgii-Hemming P."/>
            <person name="Gingeras T.R."/>
            <person name="Gojobori T."/>
            <person name="Green R.E."/>
            <person name="Gustincich S."/>
            <person name="Harbers M."/>
            <person name="Hayashi Y."/>
            <person name="Hensch T.K."/>
            <person name="Hirokawa N."/>
            <person name="Hill D."/>
            <person name="Huminiecki L."/>
            <person name="Iacono M."/>
            <person name="Ikeo K."/>
            <person name="Iwama A."/>
            <person name="Ishikawa T."/>
            <person name="Jakt M."/>
            <person name="Kanapin A."/>
            <person name="Katoh M."/>
            <person name="Kawasawa Y."/>
            <person name="Kelso J."/>
            <person name="Kitamura H."/>
            <person name="Kitano H."/>
            <person name="Kollias G."/>
            <person name="Krishnan S.P."/>
            <person name="Kruger A."/>
            <person name="Kummerfeld S.K."/>
            <person name="Kurochkin I.V."/>
            <person name="Lareau L.F."/>
            <person name="Lazarevic D."/>
            <person name="Lipovich L."/>
            <person name="Liu J."/>
            <person name="Liuni S."/>
            <person name="McWilliam S."/>
            <person name="Madan Babu M."/>
            <person name="Madera M."/>
            <person name="Marchionni L."/>
            <person name="Matsuda H."/>
            <person name="Matsuzawa S."/>
            <person name="Miki H."/>
            <person name="Mignone F."/>
            <person name="Miyake S."/>
            <person name="Morris K."/>
            <person name="Mottagui-Tabar S."/>
            <person name="Mulder N."/>
            <person name="Nakano N."/>
            <person name="Nakauchi H."/>
            <person name="Ng P."/>
            <person name="Nilsson R."/>
            <person name="Nishiguchi S."/>
            <person name="Nishikawa S."/>
            <person name="Nori F."/>
            <person name="Ohara O."/>
            <person name="Okazaki Y."/>
            <person name="Orlando V."/>
            <person name="Pang K.C."/>
            <person name="Pavan W.J."/>
            <person name="Pavesi G."/>
            <person name="Pesole G."/>
            <person name="Petrovsky N."/>
            <person name="Piazza S."/>
            <person name="Reed J."/>
            <person name="Reid J.F."/>
            <person name="Ring B.Z."/>
            <person name="Ringwald M."/>
            <person name="Rost B."/>
            <person name="Ruan Y."/>
            <person name="Salzberg S.L."/>
            <person name="Sandelin A."/>
            <person name="Schneider C."/>
            <person name="Schoenbach C."/>
            <person name="Sekiguchi K."/>
            <person name="Semple C.A."/>
            <person name="Seno S."/>
            <person name="Sessa L."/>
            <person name="Sheng Y."/>
            <person name="Shibata Y."/>
            <person name="Shimada H."/>
            <person name="Shimada K."/>
            <person name="Silva D."/>
            <person name="Sinclair B."/>
            <person name="Sperling S."/>
            <person name="Stupka E."/>
            <person name="Sugiura K."/>
            <person name="Sultana R."/>
            <person name="Takenaka Y."/>
            <person name="Taki K."/>
            <person name="Tammoja K."/>
            <person name="Tan S.L."/>
            <person name="Tang S."/>
            <person name="Taylor M.S."/>
            <person name="Tegner J."/>
            <person name="Teichmann S.A."/>
            <person name="Ueda H.R."/>
            <person name="van Nimwegen E."/>
            <person name="Verardo R."/>
            <person name="Wei C.L."/>
            <person name="Yagi K."/>
            <person name="Yamanishi H."/>
            <person name="Zabarovsky E."/>
            <person name="Zhu S."/>
            <person name="Zimmer A."/>
            <person name="Hide W."/>
            <person name="Bult C."/>
            <person name="Grimmond S.M."/>
            <person name="Teasdale R.D."/>
            <person name="Liu E.T."/>
            <person name="Brusic V."/>
            <person name="Quackenbush J."/>
            <person name="Wahlestedt C."/>
            <person name="Mattick J.S."/>
            <person name="Hume D.A."/>
            <person name="Kai C."/>
            <person name="Sasaki D."/>
            <person name="Tomaru Y."/>
            <person name="Fukuda S."/>
            <person name="Kanamori-Katayama M."/>
            <person name="Suzuki M."/>
            <person name="Aoki J."/>
            <person name="Arakawa T."/>
            <person name="Iida J."/>
            <person name="Imamura K."/>
            <person name="Itoh M."/>
            <person name="Kato T."/>
            <person name="Kawaji H."/>
            <person name="Kawagashira N."/>
            <person name="Kawashima T."/>
            <person name="Kojima M."/>
            <person name="Kondo S."/>
            <person name="Konno H."/>
            <person name="Nakano K."/>
            <person name="Ninomiya N."/>
            <person name="Nishio T."/>
            <person name="Okada M."/>
            <person name="Plessy C."/>
            <person name="Shibata K."/>
            <person name="Shiraki T."/>
            <person name="Suzuki S."/>
            <person name="Tagami M."/>
            <person name="Waki K."/>
            <person name="Watahiki A."/>
            <person name="Okamura-Oho Y."/>
            <person name="Suzuki H."/>
            <person name="Kawai J."/>
            <person name="Hayashizaki Y."/>
        </authorList>
    </citation>
    <scope>NUCLEOTIDE SEQUENCE [LARGE SCALE MRNA]</scope>
    <source>
        <strain>C57BL/6J</strain>
        <tissue>Testis</tissue>
    </source>
</reference>
<reference key="2">
    <citation type="submission" date="2005-07" db="EMBL/GenBank/DDBJ databases">
        <authorList>
            <person name="Mural R.J."/>
            <person name="Adams M.D."/>
            <person name="Myers E.W."/>
            <person name="Smith H.O."/>
            <person name="Venter J.C."/>
        </authorList>
    </citation>
    <scope>NUCLEOTIDE SEQUENCE [LARGE SCALE GENOMIC DNA]</scope>
</reference>
<reference key="3">
    <citation type="journal article" date="2004" name="Genome Res.">
        <title>The status, quality, and expansion of the NIH full-length cDNA project: the Mammalian Gene Collection (MGC).</title>
        <authorList>
            <consortium name="The MGC Project Team"/>
        </authorList>
    </citation>
    <scope>NUCLEOTIDE SEQUENCE [LARGE SCALE MRNA]</scope>
    <source>
        <tissue>Brain</tissue>
    </source>
</reference>
<reference key="4">
    <citation type="journal article" date="2010" name="Cell">
        <title>A tissue-specific atlas of mouse protein phosphorylation and expression.</title>
        <authorList>
            <person name="Huttlin E.L."/>
            <person name="Jedrychowski M.P."/>
            <person name="Elias J.E."/>
            <person name="Goswami T."/>
            <person name="Rad R."/>
            <person name="Beausoleil S.A."/>
            <person name="Villen J."/>
            <person name="Haas W."/>
            <person name="Sowa M.E."/>
            <person name="Gygi S.P."/>
        </authorList>
    </citation>
    <scope>PHOSPHORYLATION [LARGE SCALE ANALYSIS] AT SER-888 AND SER-896</scope>
    <scope>IDENTIFICATION BY MASS SPECTROMETRY [LARGE SCALE ANALYSIS]</scope>
    <source>
        <tissue>Lung</tissue>
        <tissue>Testis</tissue>
    </source>
</reference>
<reference key="5">
    <citation type="journal article" date="2011" name="Nat. Genet.">
        <title>CCDC39 is required for assembly of inner dynein arms and the dynein regulatory complex and for normal ciliary motility in humans and dogs.</title>
        <authorList>
            <person name="Merveille A.C."/>
            <person name="Davis E.E."/>
            <person name="Becker-Heck A."/>
            <person name="Legendre M."/>
            <person name="Amirav I."/>
            <person name="Bataille G."/>
            <person name="Belmont J."/>
            <person name="Beydon N."/>
            <person name="Billen F."/>
            <person name="Clement A."/>
            <person name="Clercx C."/>
            <person name="Coste A."/>
            <person name="Crosbie R."/>
            <person name="de Blic J."/>
            <person name="Deleuze S."/>
            <person name="Duquesnoy P."/>
            <person name="Escalier D."/>
            <person name="Escudier E."/>
            <person name="Fliegauf M."/>
            <person name="Horvath J."/>
            <person name="Hill K."/>
            <person name="Jorissen M."/>
            <person name="Just J."/>
            <person name="Kispert A."/>
            <person name="Lathrop M."/>
            <person name="Loges N.T."/>
            <person name="Marthin J.K."/>
            <person name="Momozawa Y."/>
            <person name="Montantin G."/>
            <person name="Nielsen K.G."/>
            <person name="Olbrich H."/>
            <person name="Papon J.F."/>
            <person name="Rayet I."/>
            <person name="Roger G."/>
            <person name="Schmidts M."/>
            <person name="Tenreiro H."/>
            <person name="Towbin J.A."/>
            <person name="Zelenika D."/>
            <person name="Zentgraf H."/>
            <person name="Georges M."/>
            <person name="Lequarre A.S."/>
            <person name="Katsanis N."/>
            <person name="Omran H."/>
            <person name="Amselem S."/>
        </authorList>
    </citation>
    <scope>TISSUE SPECIFICITY</scope>
</reference>
<sequence length="937" mass="110072">MCSEFLSELHWEDGFAIPVANQENKILEDQLAKLREEKSNLQDQLHDYEERINSMTSHLKNVNQEFLFTQSLYKARESEIESEEHFKAIAERELGRVKNETQLLEKEMAIIRERKSQMENNIFKTTQKLDDLKCQMNWDQQALEAWLEESAHKDSDSLTLQKYSQQDDNKIRALTLQLEKLTMEYNEKRKLLDSELTETLSAQLELDKAAQDFRKIHLERQELIQQWENTIEQMQRRDQEIDNCALALSRIKQEAREKEGVVKEKIKFLENEVENNIEYERKISVAERKVSKCRMDYQRHEGNRSQLKDELDTLKTTLNRTSSDLQALRKNISKVKKDIFDETLRLQKLKHHNEVVKHKLKMITEKTLSIEEKATNMEDMLKEEEKGLKEVEVQLGIVKDVLFKKVQELQNEIAKEKALVSEIEGTRSSLKHLNKQLHKLDFETLKQQEIMYSQDFYIQQVERRMSRLKGEINSEEKQALEAKILELKKTMDEKKSTLSLLESQIKKLHNDLYFIKKSNGKNNDEKESLMNKISELNLFIDRSEKELSKAKAVKEDMMIEDNLLKLQVKRARELLYSKAEEVLSLEKRKQQLGKDMEERAEEIKVHKAMLTSQIRCVEQQRKTMSSEFHERLSKIDKLKNRYEILTVVMLPPEGEEEKTQSYYVIKAAQEKEELQREGDSLDAKINKAEKEIYALQNTLQVLNSCNSNYKQSFKKVTPSSDEYALKIQLEEQKRTADERYRCKQRQIRELQEDIQSMENTFEVIGHLANNAKEKLTEKQTLAFQLRKETEEQKPKLQRITKQCGRLRREIRILKQTDNETLEEQDIQLREIIQFHKDIDQMLVNAMENAEIHAIFKTYFEQNGLELPTARGPSSRSSSQSSSLSSFRSLEDVTLQSPPTAKVIQLRFPEPPPATNDSSRSASSGSNSNIPKEKKLSK</sequence>
<comment type="function">
    <text evidence="1 2">Required for assembly of dynein regulatory complex (DRC) and inner dynein arm (IDA) complexes, which are responsible for ciliary beat regulation, thereby playing a central role in motility in cilia and flagella. Probably acts together with CCDC40 to form a molecular ruler that determines the 96 nanometer (nm) repeat length and arrangements of components in cilia and flagella. Not required for outer dynein arm complexes assembly.</text>
</comment>
<comment type="subcellular location">
    <subcellularLocation>
        <location evidence="2">Cytoplasm</location>
        <location evidence="2">Cytoskeleton</location>
        <location evidence="2">Cilium axoneme</location>
    </subcellularLocation>
    <text evidence="2">CCDC40 is required for localization to axonemes.</text>
</comment>
<comment type="tissue specificity">
    <text evidence="5">Strongly expressed in tissues rich in ciliated cells. Expressed in olfactory and vomeronasal sensory neurons and the respiratory epithelium. Expressed in node cells carrying motile cilia, in upper and lower airways, and in ependymal and choroid plexus cells.</text>
</comment>
<comment type="similarity">
    <text evidence="6">Belongs to the CCDC39 family.</text>
</comment>
<gene>
    <name evidence="7" type="primary">Ccdc39</name>
    <name evidence="7" type="synonym">D3Ertd789e</name>
</gene>
<proteinExistence type="evidence at protein level"/>
<evidence type="ECO:0000250" key="1">
    <source>
        <dbReference type="UniProtKB" id="A8IQT2"/>
    </source>
</evidence>
<evidence type="ECO:0000250" key="2">
    <source>
        <dbReference type="UniProtKB" id="Q9UFE4"/>
    </source>
</evidence>
<evidence type="ECO:0000255" key="3"/>
<evidence type="ECO:0000256" key="4">
    <source>
        <dbReference type="SAM" id="MobiDB-lite"/>
    </source>
</evidence>
<evidence type="ECO:0000269" key="5">
    <source>
    </source>
</evidence>
<evidence type="ECO:0000305" key="6"/>
<evidence type="ECO:0000312" key="7">
    <source>
        <dbReference type="MGI" id="MGI:1289263"/>
    </source>
</evidence>
<evidence type="ECO:0007744" key="8">
    <source>
    </source>
</evidence>
<keyword id="KW-0966">Cell projection</keyword>
<keyword id="KW-0969">Cilium</keyword>
<keyword id="KW-0175">Coiled coil</keyword>
<keyword id="KW-0963">Cytoplasm</keyword>
<keyword id="KW-0206">Cytoskeleton</keyword>
<keyword id="KW-0597">Phosphoprotein</keyword>
<keyword id="KW-1185">Reference proteome</keyword>
<name>CCD39_MOUSE</name>
<feature type="chain" id="PRO_0000234494" description="Coiled-coil domain-containing protein 39">
    <location>
        <begin position="1"/>
        <end position="937"/>
    </location>
</feature>
<feature type="region of interest" description="Disordered" evidence="4">
    <location>
        <begin position="866"/>
        <end position="937"/>
    </location>
</feature>
<feature type="coiled-coil region" evidence="3">
    <location>
        <begin position="16"/>
        <end position="137"/>
    </location>
</feature>
<feature type="coiled-coil region" evidence="3">
    <location>
        <begin position="165"/>
        <end position="339"/>
    </location>
</feature>
<feature type="coiled-coil region" evidence="3">
    <location>
        <begin position="365"/>
        <end position="615"/>
    </location>
</feature>
<feature type="coiled-coil region" evidence="3">
    <location>
        <begin position="664"/>
        <end position="816"/>
    </location>
</feature>
<feature type="compositionally biased region" description="Low complexity" evidence="4">
    <location>
        <begin position="873"/>
        <end position="887"/>
    </location>
</feature>
<feature type="compositionally biased region" description="Low complexity" evidence="4">
    <location>
        <begin position="915"/>
        <end position="928"/>
    </location>
</feature>
<feature type="modified residue" description="Phosphoserine" evidence="8">
    <location>
        <position position="888"/>
    </location>
</feature>
<feature type="modified residue" description="Phosphoserine" evidence="8">
    <location>
        <position position="896"/>
    </location>
</feature>
<feature type="sequence conflict" description="In Ref. 1; BAC26777." evidence="6" ref="1">
    <original>M</original>
    <variation>L</variation>
    <location>
        <position position="183"/>
    </location>
</feature>
<feature type="sequence conflict" description="In Ref. 1; BAC26777." evidence="6" ref="1">
    <original>D</original>
    <variation>H</variation>
    <location>
        <position position="193"/>
    </location>
</feature>
<accession>Q9D5Y1</accession>
<accession>B2RSM0</accession>
<accession>Q8CDG6</accession>
<organism>
    <name type="scientific">Mus musculus</name>
    <name type="common">Mouse</name>
    <dbReference type="NCBI Taxonomy" id="10090"/>
    <lineage>
        <taxon>Eukaryota</taxon>
        <taxon>Metazoa</taxon>
        <taxon>Chordata</taxon>
        <taxon>Craniata</taxon>
        <taxon>Vertebrata</taxon>
        <taxon>Euteleostomi</taxon>
        <taxon>Mammalia</taxon>
        <taxon>Eutheria</taxon>
        <taxon>Euarchontoglires</taxon>
        <taxon>Glires</taxon>
        <taxon>Rodentia</taxon>
        <taxon>Myomorpha</taxon>
        <taxon>Muroidea</taxon>
        <taxon>Muridae</taxon>
        <taxon>Murinae</taxon>
        <taxon>Mus</taxon>
        <taxon>Mus</taxon>
    </lineage>
</organism>
<protein>
    <recommendedName>
        <fullName evidence="6">Coiled-coil domain-containing protein 39</fullName>
    </recommendedName>
</protein>